<dbReference type="EMBL" id="AY014294">
    <property type="protein sequence ID" value="AAG42143.1"/>
    <property type="molecule type" value="Genomic_DNA"/>
</dbReference>
<dbReference type="EMBL" id="AY014293">
    <property type="protein sequence ID" value="AAG42143.1"/>
    <property type="status" value="JOINED"/>
    <property type="molecule type" value="Genomic_DNA"/>
</dbReference>
<dbReference type="EMBL" id="X16173">
    <property type="protein sequence ID" value="CAA34295.1"/>
    <property type="molecule type" value="Genomic_DNA"/>
</dbReference>
<dbReference type="CCDS" id="CCDS11533.1"/>
<dbReference type="PIR" id="B37042">
    <property type="entry name" value="B37042"/>
</dbReference>
<dbReference type="RefSeq" id="NP_076921.1">
    <property type="nucleotide sequence ID" value="NM_024016.4"/>
</dbReference>
<dbReference type="RefSeq" id="XP_016880053.1">
    <property type="nucleotide sequence ID" value="XM_017024564.1"/>
</dbReference>
<dbReference type="RefSeq" id="XP_054171903.1">
    <property type="nucleotide sequence ID" value="XM_054315928.1"/>
</dbReference>
<dbReference type="SMR" id="P17481"/>
<dbReference type="BioGRID" id="109458">
    <property type="interactions" value="49"/>
</dbReference>
<dbReference type="ELM" id="P17481"/>
<dbReference type="FunCoup" id="P17481">
    <property type="interactions" value="1120"/>
</dbReference>
<dbReference type="IntAct" id="P17481">
    <property type="interactions" value="10"/>
</dbReference>
<dbReference type="STRING" id="9606.ENSP00000239144"/>
<dbReference type="iPTMnet" id="P17481"/>
<dbReference type="PhosphoSitePlus" id="P17481"/>
<dbReference type="BioMuta" id="HOXB8"/>
<dbReference type="DMDM" id="20141506"/>
<dbReference type="jPOST" id="P17481"/>
<dbReference type="MassIVE" id="P17481"/>
<dbReference type="PaxDb" id="9606-ENSP00000239144"/>
<dbReference type="PeptideAtlas" id="P17481"/>
<dbReference type="ProteomicsDB" id="53475"/>
<dbReference type="Pumba" id="P17481"/>
<dbReference type="Antibodypedia" id="30298">
    <property type="antibodies" value="212 antibodies from 27 providers"/>
</dbReference>
<dbReference type="DNASU" id="3218"/>
<dbReference type="Ensembl" id="ENST00000239144.5">
    <property type="protein sequence ID" value="ENSP00000239144.4"/>
    <property type="gene ID" value="ENSG00000120068.7"/>
</dbReference>
<dbReference type="GeneID" id="3218"/>
<dbReference type="KEGG" id="hsa:3218"/>
<dbReference type="MANE-Select" id="ENST00000239144.5">
    <property type="protein sequence ID" value="ENSP00000239144.4"/>
    <property type="RefSeq nucleotide sequence ID" value="NM_024016.4"/>
    <property type="RefSeq protein sequence ID" value="NP_076921.1"/>
</dbReference>
<dbReference type="UCSC" id="uc002inw.3">
    <property type="organism name" value="human"/>
</dbReference>
<dbReference type="AGR" id="HGNC:5119"/>
<dbReference type="CTD" id="3218"/>
<dbReference type="DisGeNET" id="3218"/>
<dbReference type="GeneCards" id="HOXB8"/>
<dbReference type="HGNC" id="HGNC:5119">
    <property type="gene designation" value="HOXB8"/>
</dbReference>
<dbReference type="HPA" id="ENSG00000120068">
    <property type="expression patterns" value="Tissue enhanced (brain, epididymis, kidney)"/>
</dbReference>
<dbReference type="MIM" id="142963">
    <property type="type" value="gene"/>
</dbReference>
<dbReference type="neXtProt" id="NX_P17481"/>
<dbReference type="OpenTargets" id="ENSG00000120068"/>
<dbReference type="PharmGKB" id="PA29395"/>
<dbReference type="VEuPathDB" id="HostDB:ENSG00000120068"/>
<dbReference type="eggNOG" id="KOG0489">
    <property type="taxonomic scope" value="Eukaryota"/>
</dbReference>
<dbReference type="GeneTree" id="ENSGT00940000161529"/>
<dbReference type="HOGENOM" id="CLU_061398_1_0_1"/>
<dbReference type="InParanoid" id="P17481"/>
<dbReference type="OMA" id="SEDCCEK"/>
<dbReference type="OrthoDB" id="6159439at2759"/>
<dbReference type="PAN-GO" id="P17481">
    <property type="GO annotations" value="4 GO annotations based on evolutionary models"/>
</dbReference>
<dbReference type="PhylomeDB" id="P17481"/>
<dbReference type="TreeFam" id="TF316310"/>
<dbReference type="PathwayCommons" id="P17481"/>
<dbReference type="SignaLink" id="P17481"/>
<dbReference type="SIGNOR" id="P17481"/>
<dbReference type="BioGRID-ORCS" id="3218">
    <property type="hits" value="10 hits in 1176 CRISPR screens"/>
</dbReference>
<dbReference type="ChiTaRS" id="HOXB8">
    <property type="organism name" value="human"/>
</dbReference>
<dbReference type="GeneWiki" id="HOXB8"/>
<dbReference type="GenomeRNAi" id="3218"/>
<dbReference type="Pharos" id="P17481">
    <property type="development level" value="Tbio"/>
</dbReference>
<dbReference type="PRO" id="PR:P17481"/>
<dbReference type="Proteomes" id="UP000005640">
    <property type="component" value="Chromosome 17"/>
</dbReference>
<dbReference type="RNAct" id="P17481">
    <property type="molecule type" value="protein"/>
</dbReference>
<dbReference type="Bgee" id="ENSG00000120068">
    <property type="expression patterns" value="Expressed in corpus epididymis and 84 other cell types or tissues"/>
</dbReference>
<dbReference type="ExpressionAtlas" id="P17481">
    <property type="expression patterns" value="baseline and differential"/>
</dbReference>
<dbReference type="GO" id="GO:0000785">
    <property type="term" value="C:chromatin"/>
    <property type="evidence" value="ECO:0000247"/>
    <property type="project" value="NTNU_SB"/>
</dbReference>
<dbReference type="GO" id="GO:0005654">
    <property type="term" value="C:nucleoplasm"/>
    <property type="evidence" value="ECO:0000314"/>
    <property type="project" value="HPA"/>
</dbReference>
<dbReference type="GO" id="GO:0005634">
    <property type="term" value="C:nucleus"/>
    <property type="evidence" value="ECO:0000318"/>
    <property type="project" value="GO_Central"/>
</dbReference>
<dbReference type="GO" id="GO:0000981">
    <property type="term" value="F:DNA-binding transcription factor activity, RNA polymerase II-specific"/>
    <property type="evidence" value="ECO:0000247"/>
    <property type="project" value="NTNU_SB"/>
</dbReference>
<dbReference type="GO" id="GO:0001227">
    <property type="term" value="F:DNA-binding transcription repressor activity, RNA polymerase II-specific"/>
    <property type="evidence" value="ECO:0007669"/>
    <property type="project" value="Ensembl"/>
</dbReference>
<dbReference type="GO" id="GO:0000977">
    <property type="term" value="F:RNA polymerase II transcription regulatory region sequence-specific DNA binding"/>
    <property type="evidence" value="ECO:0000318"/>
    <property type="project" value="GO_Central"/>
</dbReference>
<dbReference type="GO" id="GO:1990837">
    <property type="term" value="F:sequence-specific double-stranded DNA binding"/>
    <property type="evidence" value="ECO:0000314"/>
    <property type="project" value="ARUK-UCL"/>
</dbReference>
<dbReference type="GO" id="GO:0008344">
    <property type="term" value="P:adult locomotory behavior"/>
    <property type="evidence" value="ECO:0007669"/>
    <property type="project" value="Ensembl"/>
</dbReference>
<dbReference type="GO" id="GO:0009952">
    <property type="term" value="P:anterior/posterior pattern specification"/>
    <property type="evidence" value="ECO:0007669"/>
    <property type="project" value="Ensembl"/>
</dbReference>
<dbReference type="GO" id="GO:0021516">
    <property type="term" value="P:dorsal spinal cord development"/>
    <property type="evidence" value="ECO:0007669"/>
    <property type="project" value="Ensembl"/>
</dbReference>
<dbReference type="GO" id="GO:0048704">
    <property type="term" value="P:embryonic skeletal system morphogenesis"/>
    <property type="evidence" value="ECO:0007669"/>
    <property type="project" value="Ensembl"/>
</dbReference>
<dbReference type="GO" id="GO:0007625">
    <property type="term" value="P:grooming behavior"/>
    <property type="evidence" value="ECO:0007669"/>
    <property type="project" value="Ensembl"/>
</dbReference>
<dbReference type="GO" id="GO:0045638">
    <property type="term" value="P:negative regulation of myeloid cell differentiation"/>
    <property type="evidence" value="ECO:0000250"/>
    <property type="project" value="UniProtKB"/>
</dbReference>
<dbReference type="GO" id="GO:0006357">
    <property type="term" value="P:regulation of transcription by RNA polymerase II"/>
    <property type="evidence" value="ECO:0000318"/>
    <property type="project" value="GO_Central"/>
</dbReference>
<dbReference type="GO" id="GO:0019233">
    <property type="term" value="P:sensory perception of pain"/>
    <property type="evidence" value="ECO:0007669"/>
    <property type="project" value="Ensembl"/>
</dbReference>
<dbReference type="CDD" id="cd00086">
    <property type="entry name" value="homeodomain"/>
    <property type="match status" value="1"/>
</dbReference>
<dbReference type="FunFam" id="1.10.10.60:FF:000072">
    <property type="entry name" value="Homeobox protein Hox-B8"/>
    <property type="match status" value="1"/>
</dbReference>
<dbReference type="Gene3D" id="1.10.10.60">
    <property type="entry name" value="Homeodomain-like"/>
    <property type="match status" value="1"/>
</dbReference>
<dbReference type="InterPro" id="IPR050948">
    <property type="entry name" value="Antp_homeobox_TF"/>
</dbReference>
<dbReference type="InterPro" id="IPR001356">
    <property type="entry name" value="HD"/>
</dbReference>
<dbReference type="InterPro" id="IPR020479">
    <property type="entry name" value="HD_metazoa"/>
</dbReference>
<dbReference type="InterPro" id="IPR001827">
    <property type="entry name" value="Homeobox_Antennapedia_CS"/>
</dbReference>
<dbReference type="InterPro" id="IPR017970">
    <property type="entry name" value="Homeobox_CS"/>
</dbReference>
<dbReference type="InterPro" id="IPR009057">
    <property type="entry name" value="Homeodomain-like_sf"/>
</dbReference>
<dbReference type="InterPro" id="IPR000047">
    <property type="entry name" value="HTH_motif"/>
</dbReference>
<dbReference type="PANTHER" id="PTHR46166">
    <property type="entry name" value="HOMEOBOX DOMAIN-CONTAINING PROTEIN"/>
    <property type="match status" value="1"/>
</dbReference>
<dbReference type="PANTHER" id="PTHR46166:SF2">
    <property type="entry name" value="HOMEOBOX PROTEIN HOX-B8"/>
    <property type="match status" value="1"/>
</dbReference>
<dbReference type="Pfam" id="PF00046">
    <property type="entry name" value="Homeodomain"/>
    <property type="match status" value="1"/>
</dbReference>
<dbReference type="PRINTS" id="PR00024">
    <property type="entry name" value="HOMEOBOX"/>
</dbReference>
<dbReference type="PRINTS" id="PR00031">
    <property type="entry name" value="HTHREPRESSR"/>
</dbReference>
<dbReference type="SMART" id="SM00389">
    <property type="entry name" value="HOX"/>
    <property type="match status" value="1"/>
</dbReference>
<dbReference type="SUPFAM" id="SSF46689">
    <property type="entry name" value="Homeodomain-like"/>
    <property type="match status" value="1"/>
</dbReference>
<dbReference type="PROSITE" id="PS00032">
    <property type="entry name" value="ANTENNAPEDIA"/>
    <property type="match status" value="1"/>
</dbReference>
<dbReference type="PROSITE" id="PS00027">
    <property type="entry name" value="HOMEOBOX_1"/>
    <property type="match status" value="1"/>
</dbReference>
<dbReference type="PROSITE" id="PS50071">
    <property type="entry name" value="HOMEOBOX_2"/>
    <property type="match status" value="1"/>
</dbReference>
<accession>P17481</accession>
<accession>Q9H1I2</accession>
<feature type="chain" id="PRO_0000200148" description="Homeobox protein Hox-B8">
    <location>
        <begin position="1"/>
        <end position="243"/>
    </location>
</feature>
<feature type="DNA-binding region" description="Homeobox" evidence="1">
    <location>
        <begin position="146"/>
        <end position="205"/>
    </location>
</feature>
<feature type="region of interest" description="Disordered" evidence="2">
    <location>
        <begin position="203"/>
        <end position="243"/>
    </location>
</feature>
<feature type="short sequence motif" description="Antp-type hexapeptide">
    <location>
        <begin position="134"/>
        <end position="139"/>
    </location>
</feature>
<proteinExistence type="evidence at protein level"/>
<gene>
    <name type="primary">HOXB8</name>
    <name type="synonym">HOX2D</name>
</gene>
<organism>
    <name type="scientific">Homo sapiens</name>
    <name type="common">Human</name>
    <dbReference type="NCBI Taxonomy" id="9606"/>
    <lineage>
        <taxon>Eukaryota</taxon>
        <taxon>Metazoa</taxon>
        <taxon>Chordata</taxon>
        <taxon>Craniata</taxon>
        <taxon>Vertebrata</taxon>
        <taxon>Euteleostomi</taxon>
        <taxon>Mammalia</taxon>
        <taxon>Eutheria</taxon>
        <taxon>Euarchontoglires</taxon>
        <taxon>Primates</taxon>
        <taxon>Haplorrhini</taxon>
        <taxon>Catarrhini</taxon>
        <taxon>Hominidae</taxon>
        <taxon>Homo</taxon>
    </lineage>
</organism>
<comment type="function">
    <text>Sequence-specific transcription factor which is part of a developmental regulatory system that provides cells with specific positional identities on the anterior-posterior axis.</text>
</comment>
<comment type="subunit">
    <text evidence="3 4">Forms a DNA-binding heterodimer with transcription factor PBX1.</text>
</comment>
<comment type="subcellular location">
    <subcellularLocation>
        <location>Nucleus</location>
    </subcellularLocation>
</comment>
<comment type="developmental stage">
    <text>Expressed in whole embryos and fetuses at 5-9 weeks from conception.</text>
</comment>
<comment type="similarity">
    <text evidence="5">Belongs to the Antp homeobox family.</text>
</comment>
<evidence type="ECO:0000255" key="1">
    <source>
        <dbReference type="PROSITE-ProRule" id="PRU00108"/>
    </source>
</evidence>
<evidence type="ECO:0000256" key="2">
    <source>
        <dbReference type="SAM" id="MobiDB-lite"/>
    </source>
</evidence>
<evidence type="ECO:0000269" key="3">
    <source>
    </source>
</evidence>
<evidence type="ECO:0000269" key="4">
    <source>
    </source>
</evidence>
<evidence type="ECO:0000305" key="5"/>
<reference key="1">
    <citation type="journal article" date="2002" name="Teratology">
        <title>Complete mutation analysis panel of the 39 human HOX genes.</title>
        <authorList>
            <person name="Kosaki K."/>
            <person name="Kosaki R."/>
            <person name="Suzuki T."/>
            <person name="Yoshihashi H."/>
            <person name="Takahashi T."/>
            <person name="Sasaki K."/>
            <person name="Tomita M."/>
            <person name="McGinnis W."/>
            <person name="Matsuo N."/>
        </authorList>
    </citation>
    <scope>NUCLEOTIDE SEQUENCE [GENOMIC DNA]</scope>
</reference>
<reference key="2">
    <citation type="journal article" date="1989" name="Differentiation">
        <title>Differential expression of human HOX-2 genes along the anterior-posterior axis in embryonic central nervous system.</title>
        <authorList>
            <person name="Giampaolo A."/>
            <person name="Acampora D."/>
            <person name="Zappavigna V."/>
            <person name="Pannese M."/>
            <person name="D'Esposito M."/>
            <person name="Care A."/>
            <person name="Faiella A."/>
            <person name="Stornaiuolo A."/>
            <person name="Russo G."/>
            <person name="Simeone A."/>
            <person name="Boncinelli E."/>
            <person name="Peschle C."/>
        </authorList>
    </citation>
    <scope>NUCLEOTIDE SEQUENCE [GENOMIC DNA] OF 142-211</scope>
    <source>
        <tissue>Placenta</tissue>
    </source>
</reference>
<reference key="3">
    <citation type="journal article" date="1989" name="Genome">
        <title>Organization of human class I homeobox genes.</title>
        <authorList>
            <person name="Boncinelli E."/>
            <person name="Acampora D."/>
            <person name="Pannese M."/>
            <person name="D'Esposito M."/>
            <person name="Somma R."/>
            <person name="Gaudino G."/>
            <person name="Stornaiuolo A."/>
            <person name="Cafiero M."/>
            <person name="Faiella A."/>
            <person name="Simeone A."/>
        </authorList>
    </citation>
    <scope>NUCLEOTIDE SEQUENCE [GENOMIC DNA] OF 146-211</scope>
</reference>
<reference key="4">
    <citation type="journal article" date="1995" name="Mol. Cell. Biol.">
        <title>Both Pbx1 and E2A-Pbx1 bind the DNA motif ATCAATCAA cooperatively with the products of multiple murine Hox genes, some of which are themselves oncogenes.</title>
        <authorList>
            <person name="Lu Q."/>
            <person name="Knoepfler P.S."/>
            <person name="Scheele J."/>
            <person name="Wright D.D."/>
            <person name="Kamps M.P."/>
        </authorList>
    </citation>
    <scope>INTERACTION WITH PXB1</scope>
</reference>
<reference key="5">
    <citation type="journal article" date="1997" name="Oncogene">
        <title>The highest affinity DNA element bound by Pbx complexes in t(1;19) leukemic cells fails to mediate cooperative DNA-binding or cooperative transactivation by E2a-Pbx1 and class I Hox proteins - evidence for selective targetting of E2a-Pbx1 to a subset of Pbx-recognition elements.</title>
        <authorList>
            <person name="Knoepfler P.S."/>
            <person name="Kamps M.P."/>
        </authorList>
    </citation>
    <scope>INTERACTION WITH PBX1</scope>
</reference>
<name>HXB8_HUMAN</name>
<sequence length="243" mass="27574">MSSYFVNSLFSKYKTGESLRPNYYDCGFAQDLGGRPTVVYGPSSGGSFQHPSQIQEFYHGPSSLSTAPYQQNPCAVACHGDPGNFYGYDPLQRQSLFGAQDPDLVQYADCKLAAASGLGEEAEGSEQSPSPTQLFPWMRPQAAAGRRRGRQTYSRYQTLELEKEFLFNPYLTRKRRIEVSHALGLTERQVKIWFQNRRMKWKKENNKDKFPSSKCEQEELEKQKLERAPEAADEGDAQKGDKK</sequence>
<keyword id="KW-0217">Developmental protein</keyword>
<keyword id="KW-0238">DNA-binding</keyword>
<keyword id="KW-0371">Homeobox</keyword>
<keyword id="KW-0539">Nucleus</keyword>
<keyword id="KW-1267">Proteomics identification</keyword>
<keyword id="KW-1185">Reference proteome</keyword>
<keyword id="KW-0804">Transcription</keyword>
<keyword id="KW-0805">Transcription regulation</keyword>
<protein>
    <recommendedName>
        <fullName>Homeobox protein Hox-B8</fullName>
    </recommendedName>
    <alternativeName>
        <fullName>Homeobox protein Hox-2.4</fullName>
    </alternativeName>
    <alternativeName>
        <fullName>Homeobox protein Hox-2D</fullName>
    </alternativeName>
</protein>